<protein>
    <recommendedName>
        <fullName evidence="1">tRNA-2-methylthio-N(6)-dimethylallyladenosine synthase</fullName>
        <ecNumber evidence="1">2.8.4.3</ecNumber>
    </recommendedName>
    <alternativeName>
        <fullName evidence="1">(Dimethylallyl)adenosine tRNA methylthiotransferase MiaB</fullName>
    </alternativeName>
    <alternativeName>
        <fullName evidence="1">tRNA-i(6)A37 methylthiotransferase</fullName>
    </alternativeName>
</protein>
<gene>
    <name evidence="1" type="primary">miaB</name>
    <name type="ordered locus">Z0810</name>
    <name type="ordered locus">ECs0699</name>
</gene>
<accession>P0AEI3</accession>
<accession>P77645</accession>
<organism>
    <name type="scientific">Escherichia coli O157:H7</name>
    <dbReference type="NCBI Taxonomy" id="83334"/>
    <lineage>
        <taxon>Bacteria</taxon>
        <taxon>Pseudomonadati</taxon>
        <taxon>Pseudomonadota</taxon>
        <taxon>Gammaproteobacteria</taxon>
        <taxon>Enterobacterales</taxon>
        <taxon>Enterobacteriaceae</taxon>
        <taxon>Escherichia</taxon>
    </lineage>
</organism>
<comment type="function">
    <text evidence="1">Catalyzes the methylthiolation of N6-(dimethylallyl)adenosine (i(6)A), leading to the formation of 2-methylthio-N6-(dimethylallyl)adenosine (ms(2)i(6)A) at position 37 in tRNAs that read codons beginning with uridine.</text>
</comment>
<comment type="catalytic activity">
    <reaction evidence="1">
        <text>N(6)-dimethylallyladenosine(37) in tRNA + (sulfur carrier)-SH + AH2 + 2 S-adenosyl-L-methionine = 2-methylsulfanyl-N(6)-dimethylallyladenosine(37) in tRNA + (sulfur carrier)-H + 5'-deoxyadenosine + L-methionine + A + S-adenosyl-L-homocysteine + 2 H(+)</text>
        <dbReference type="Rhea" id="RHEA:37067"/>
        <dbReference type="Rhea" id="RHEA-COMP:10375"/>
        <dbReference type="Rhea" id="RHEA-COMP:10376"/>
        <dbReference type="Rhea" id="RHEA-COMP:14737"/>
        <dbReference type="Rhea" id="RHEA-COMP:14739"/>
        <dbReference type="ChEBI" id="CHEBI:13193"/>
        <dbReference type="ChEBI" id="CHEBI:15378"/>
        <dbReference type="ChEBI" id="CHEBI:17319"/>
        <dbReference type="ChEBI" id="CHEBI:17499"/>
        <dbReference type="ChEBI" id="CHEBI:29917"/>
        <dbReference type="ChEBI" id="CHEBI:57844"/>
        <dbReference type="ChEBI" id="CHEBI:57856"/>
        <dbReference type="ChEBI" id="CHEBI:59789"/>
        <dbReference type="ChEBI" id="CHEBI:64428"/>
        <dbReference type="ChEBI" id="CHEBI:74415"/>
        <dbReference type="ChEBI" id="CHEBI:74417"/>
        <dbReference type="EC" id="2.8.4.3"/>
    </reaction>
</comment>
<comment type="cofactor">
    <cofactor evidence="1">
        <name>[4Fe-4S] cluster</name>
        <dbReference type="ChEBI" id="CHEBI:49883"/>
    </cofactor>
    <text evidence="1">Binds 2 [4Fe-4S] clusters. One cluster is coordinated with 3 cysteines and an exchangeable S-adenosyl-L-methionine.</text>
</comment>
<comment type="subunit">
    <text evidence="1">Monomer.</text>
</comment>
<comment type="subcellular location">
    <subcellularLocation>
        <location evidence="1">Cytoplasm</location>
    </subcellularLocation>
</comment>
<comment type="similarity">
    <text evidence="1">Belongs to the methylthiotransferase family. MiaB subfamily.</text>
</comment>
<sequence>MTKKLHIKTWGCQMNEYDSSKMADLLDATHGYQLTDVAEEADVLLLNTCSIREKAQEKVFHQLGRWKLLKEKNPDLIIGVGGCVASQEGEHIRQRAHYVDIIFGPQTLHRLPEMINSVRGDRSPVVDISFPEIEKFDRLPEPRAEGPTAFVSIMEGCNKYCTYCVVPYTRGEEVSRPSDDILFEIAQLAAQGVREVNLLGQNVNAWRGENYDGTTGSFADLLRLVAAIDGIDRIRFTTSHPIEFTDDIIEVYRDTPELVSFLHLPVQSGSDRILNLMGRTHTALEYKAIIRKLRAARPDIQISSDFIVGFPGETTEDFEKTMKLIADVNFDMSYSFIFSARPGTPAADMVDDVPEEEKKQRLYILQERINQQAMAWSRRMLGTTQRILVEGTSRKSIMELSGRTENNRVVNFEGTPDMIGKFVDVEITDVYPNSLRGKVVRTEDEMGLRVAETPESVIARTRKENDLGVGYYQP</sequence>
<reference key="1">
    <citation type="journal article" date="2001" name="Nature">
        <title>Genome sequence of enterohaemorrhagic Escherichia coli O157:H7.</title>
        <authorList>
            <person name="Perna N.T."/>
            <person name="Plunkett G. III"/>
            <person name="Burland V."/>
            <person name="Mau B."/>
            <person name="Glasner J.D."/>
            <person name="Rose D.J."/>
            <person name="Mayhew G.F."/>
            <person name="Evans P.S."/>
            <person name="Gregor J."/>
            <person name="Kirkpatrick H.A."/>
            <person name="Posfai G."/>
            <person name="Hackett J."/>
            <person name="Klink S."/>
            <person name="Boutin A."/>
            <person name="Shao Y."/>
            <person name="Miller L."/>
            <person name="Grotbeck E.J."/>
            <person name="Davis N.W."/>
            <person name="Lim A."/>
            <person name="Dimalanta E.T."/>
            <person name="Potamousis K."/>
            <person name="Apodaca J."/>
            <person name="Anantharaman T.S."/>
            <person name="Lin J."/>
            <person name="Yen G."/>
            <person name="Schwartz D.C."/>
            <person name="Welch R.A."/>
            <person name="Blattner F.R."/>
        </authorList>
    </citation>
    <scope>NUCLEOTIDE SEQUENCE [LARGE SCALE GENOMIC DNA]</scope>
    <source>
        <strain>O157:H7 / EDL933 / ATCC 700927 / EHEC</strain>
    </source>
</reference>
<reference key="2">
    <citation type="journal article" date="2001" name="DNA Res.">
        <title>Complete genome sequence of enterohemorrhagic Escherichia coli O157:H7 and genomic comparison with a laboratory strain K-12.</title>
        <authorList>
            <person name="Hayashi T."/>
            <person name="Makino K."/>
            <person name="Ohnishi M."/>
            <person name="Kurokawa K."/>
            <person name="Ishii K."/>
            <person name="Yokoyama K."/>
            <person name="Han C.-G."/>
            <person name="Ohtsubo E."/>
            <person name="Nakayama K."/>
            <person name="Murata T."/>
            <person name="Tanaka M."/>
            <person name="Tobe T."/>
            <person name="Iida T."/>
            <person name="Takami H."/>
            <person name="Honda T."/>
            <person name="Sasakawa C."/>
            <person name="Ogasawara N."/>
            <person name="Yasunaga T."/>
            <person name="Kuhara S."/>
            <person name="Shiba T."/>
            <person name="Hattori M."/>
            <person name="Shinagawa H."/>
        </authorList>
    </citation>
    <scope>NUCLEOTIDE SEQUENCE [LARGE SCALE GENOMIC DNA]</scope>
    <source>
        <strain>O157:H7 / Sakai / RIMD 0509952 / EHEC</strain>
    </source>
</reference>
<dbReference type="EC" id="2.8.4.3" evidence="1"/>
<dbReference type="EMBL" id="AE005174">
    <property type="protein sequence ID" value="AAG54994.1"/>
    <property type="molecule type" value="Genomic_DNA"/>
</dbReference>
<dbReference type="EMBL" id="BA000007">
    <property type="protein sequence ID" value="BAB34122.1"/>
    <property type="molecule type" value="Genomic_DNA"/>
</dbReference>
<dbReference type="PIR" id="C90716">
    <property type="entry name" value="C90716"/>
</dbReference>
<dbReference type="RefSeq" id="NP_308726.1">
    <property type="nucleotide sequence ID" value="NC_002695.1"/>
</dbReference>
<dbReference type="RefSeq" id="WP_000162740.1">
    <property type="nucleotide sequence ID" value="NZ_VOAI01000012.1"/>
</dbReference>
<dbReference type="SMR" id="P0AEI3"/>
<dbReference type="STRING" id="155864.Z0810"/>
<dbReference type="DNASU" id="917060"/>
<dbReference type="GeneID" id="86863171"/>
<dbReference type="GeneID" id="917060"/>
<dbReference type="KEGG" id="ece:Z0810"/>
<dbReference type="KEGG" id="ecs:ECs_0699"/>
<dbReference type="PATRIC" id="fig|386585.9.peg.813"/>
<dbReference type="eggNOG" id="COG0621">
    <property type="taxonomic scope" value="Bacteria"/>
</dbReference>
<dbReference type="HOGENOM" id="CLU_018697_2_0_6"/>
<dbReference type="OMA" id="CEHFHIP"/>
<dbReference type="Proteomes" id="UP000000558">
    <property type="component" value="Chromosome"/>
</dbReference>
<dbReference type="Proteomes" id="UP000002519">
    <property type="component" value="Chromosome"/>
</dbReference>
<dbReference type="GO" id="GO:0005829">
    <property type="term" value="C:cytosol"/>
    <property type="evidence" value="ECO:0007669"/>
    <property type="project" value="TreeGrafter"/>
</dbReference>
<dbReference type="GO" id="GO:0051539">
    <property type="term" value="F:4 iron, 4 sulfur cluster binding"/>
    <property type="evidence" value="ECO:0007669"/>
    <property type="project" value="UniProtKB-UniRule"/>
</dbReference>
<dbReference type="GO" id="GO:0046872">
    <property type="term" value="F:metal ion binding"/>
    <property type="evidence" value="ECO:0007669"/>
    <property type="project" value="UniProtKB-KW"/>
</dbReference>
<dbReference type="GO" id="GO:0035597">
    <property type="term" value="F:N6-isopentenyladenosine methylthiotransferase activity"/>
    <property type="evidence" value="ECO:0007669"/>
    <property type="project" value="TreeGrafter"/>
</dbReference>
<dbReference type="CDD" id="cd01335">
    <property type="entry name" value="Radical_SAM"/>
    <property type="match status" value="1"/>
</dbReference>
<dbReference type="FunFam" id="3.40.50.12160:FF:000001">
    <property type="entry name" value="tRNA-2-methylthio-N(6)-dimethylallyladenosine synthase"/>
    <property type="match status" value="1"/>
</dbReference>
<dbReference type="FunFam" id="3.80.30.20:FF:000001">
    <property type="entry name" value="tRNA-2-methylthio-N(6)-dimethylallyladenosine synthase 2"/>
    <property type="match status" value="1"/>
</dbReference>
<dbReference type="Gene3D" id="3.40.50.12160">
    <property type="entry name" value="Methylthiotransferase, N-terminal domain"/>
    <property type="match status" value="1"/>
</dbReference>
<dbReference type="Gene3D" id="3.80.30.20">
    <property type="entry name" value="tm_1862 like domain"/>
    <property type="match status" value="1"/>
</dbReference>
<dbReference type="HAMAP" id="MF_01864">
    <property type="entry name" value="tRNA_metthiotr_MiaB"/>
    <property type="match status" value="1"/>
</dbReference>
<dbReference type="InterPro" id="IPR006638">
    <property type="entry name" value="Elp3/MiaA/NifB-like_rSAM"/>
</dbReference>
<dbReference type="InterPro" id="IPR005839">
    <property type="entry name" value="Methylthiotransferase"/>
</dbReference>
<dbReference type="InterPro" id="IPR020612">
    <property type="entry name" value="Methylthiotransferase_CS"/>
</dbReference>
<dbReference type="InterPro" id="IPR013848">
    <property type="entry name" value="Methylthiotransferase_N"/>
</dbReference>
<dbReference type="InterPro" id="IPR038135">
    <property type="entry name" value="Methylthiotransferase_N_sf"/>
</dbReference>
<dbReference type="InterPro" id="IPR006463">
    <property type="entry name" value="MiaB_methiolase"/>
</dbReference>
<dbReference type="InterPro" id="IPR007197">
    <property type="entry name" value="rSAM"/>
</dbReference>
<dbReference type="InterPro" id="IPR023404">
    <property type="entry name" value="rSAM_horseshoe"/>
</dbReference>
<dbReference type="InterPro" id="IPR002792">
    <property type="entry name" value="TRAM_dom"/>
</dbReference>
<dbReference type="NCBIfam" id="TIGR01574">
    <property type="entry name" value="miaB-methiolase"/>
    <property type="match status" value="1"/>
</dbReference>
<dbReference type="NCBIfam" id="TIGR00089">
    <property type="entry name" value="MiaB/RimO family radical SAM methylthiotransferase"/>
    <property type="match status" value="1"/>
</dbReference>
<dbReference type="PANTHER" id="PTHR43020">
    <property type="entry name" value="CDK5 REGULATORY SUBUNIT-ASSOCIATED PROTEIN 1"/>
    <property type="match status" value="1"/>
</dbReference>
<dbReference type="PANTHER" id="PTHR43020:SF2">
    <property type="entry name" value="MITOCHONDRIAL TRNA METHYLTHIOTRANSFERASE CDK5RAP1"/>
    <property type="match status" value="1"/>
</dbReference>
<dbReference type="Pfam" id="PF04055">
    <property type="entry name" value="Radical_SAM"/>
    <property type="match status" value="1"/>
</dbReference>
<dbReference type="Pfam" id="PF01938">
    <property type="entry name" value="TRAM"/>
    <property type="match status" value="1"/>
</dbReference>
<dbReference type="Pfam" id="PF00919">
    <property type="entry name" value="UPF0004"/>
    <property type="match status" value="1"/>
</dbReference>
<dbReference type="SFLD" id="SFLDF00273">
    <property type="entry name" value="(dimethylallyl)adenosine_tRNA"/>
    <property type="match status" value="1"/>
</dbReference>
<dbReference type="SFLD" id="SFLDG01082">
    <property type="entry name" value="B12-binding_domain_containing"/>
    <property type="match status" value="1"/>
</dbReference>
<dbReference type="SFLD" id="SFLDS00029">
    <property type="entry name" value="Radical_SAM"/>
    <property type="match status" value="1"/>
</dbReference>
<dbReference type="SMART" id="SM00729">
    <property type="entry name" value="Elp3"/>
    <property type="match status" value="1"/>
</dbReference>
<dbReference type="SUPFAM" id="SSF102114">
    <property type="entry name" value="Radical SAM enzymes"/>
    <property type="match status" value="1"/>
</dbReference>
<dbReference type="PROSITE" id="PS51449">
    <property type="entry name" value="MTTASE_N"/>
    <property type="match status" value="1"/>
</dbReference>
<dbReference type="PROSITE" id="PS01278">
    <property type="entry name" value="MTTASE_RADICAL"/>
    <property type="match status" value="1"/>
</dbReference>
<dbReference type="PROSITE" id="PS51918">
    <property type="entry name" value="RADICAL_SAM"/>
    <property type="match status" value="1"/>
</dbReference>
<dbReference type="PROSITE" id="PS50926">
    <property type="entry name" value="TRAM"/>
    <property type="match status" value="1"/>
</dbReference>
<evidence type="ECO:0000255" key="1">
    <source>
        <dbReference type="HAMAP-Rule" id="MF_01864"/>
    </source>
</evidence>
<evidence type="ECO:0000255" key="2">
    <source>
        <dbReference type="PROSITE-ProRule" id="PRU01266"/>
    </source>
</evidence>
<name>MIAB_ECO57</name>
<proteinExistence type="inferred from homology"/>
<feature type="chain" id="PRO_0000141735" description="tRNA-2-methylthio-N(6)-dimethylallyladenosine synthase">
    <location>
        <begin position="1"/>
        <end position="474"/>
    </location>
</feature>
<feature type="domain" description="MTTase N-terminal" evidence="1">
    <location>
        <begin position="3"/>
        <end position="120"/>
    </location>
</feature>
<feature type="domain" description="Radical SAM core" evidence="2">
    <location>
        <begin position="143"/>
        <end position="375"/>
    </location>
</feature>
<feature type="domain" description="TRAM" evidence="1">
    <location>
        <begin position="378"/>
        <end position="441"/>
    </location>
</feature>
<feature type="binding site" evidence="1">
    <location>
        <position position="12"/>
    </location>
    <ligand>
        <name>[4Fe-4S] cluster</name>
        <dbReference type="ChEBI" id="CHEBI:49883"/>
        <label>1</label>
    </ligand>
</feature>
<feature type="binding site" evidence="1">
    <location>
        <position position="49"/>
    </location>
    <ligand>
        <name>[4Fe-4S] cluster</name>
        <dbReference type="ChEBI" id="CHEBI:49883"/>
        <label>1</label>
    </ligand>
</feature>
<feature type="binding site" evidence="1">
    <location>
        <position position="83"/>
    </location>
    <ligand>
        <name>[4Fe-4S] cluster</name>
        <dbReference type="ChEBI" id="CHEBI:49883"/>
        <label>1</label>
    </ligand>
</feature>
<feature type="binding site" evidence="1">
    <location>
        <position position="157"/>
    </location>
    <ligand>
        <name>[4Fe-4S] cluster</name>
        <dbReference type="ChEBI" id="CHEBI:49883"/>
        <label>2</label>
        <note>4Fe-4S-S-AdoMet</note>
    </ligand>
</feature>
<feature type="binding site" evidence="1">
    <location>
        <position position="161"/>
    </location>
    <ligand>
        <name>[4Fe-4S] cluster</name>
        <dbReference type="ChEBI" id="CHEBI:49883"/>
        <label>2</label>
        <note>4Fe-4S-S-AdoMet</note>
    </ligand>
</feature>
<feature type="binding site" evidence="1">
    <location>
        <position position="164"/>
    </location>
    <ligand>
        <name>[4Fe-4S] cluster</name>
        <dbReference type="ChEBI" id="CHEBI:49883"/>
        <label>2</label>
        <note>4Fe-4S-S-AdoMet</note>
    </ligand>
</feature>
<keyword id="KW-0004">4Fe-4S</keyword>
<keyword id="KW-0963">Cytoplasm</keyword>
<keyword id="KW-0408">Iron</keyword>
<keyword id="KW-0411">Iron-sulfur</keyword>
<keyword id="KW-0479">Metal-binding</keyword>
<keyword id="KW-1185">Reference proteome</keyword>
<keyword id="KW-0949">S-adenosyl-L-methionine</keyword>
<keyword id="KW-0808">Transferase</keyword>
<keyword id="KW-0819">tRNA processing</keyword>